<accession>Q66D58</accession>
<dbReference type="EC" id="4.6.1.17" evidence="1"/>
<dbReference type="EMBL" id="BX936398">
    <property type="protein sequence ID" value="CAH20431.1"/>
    <property type="molecule type" value="Genomic_DNA"/>
</dbReference>
<dbReference type="RefSeq" id="WP_011191960.1">
    <property type="nucleotide sequence ID" value="NC_006155.1"/>
</dbReference>
<dbReference type="SMR" id="Q66D58"/>
<dbReference type="GeneID" id="49786736"/>
<dbReference type="KEGG" id="ypo:BZ17_1336"/>
<dbReference type="KEGG" id="yps:YPTB1191"/>
<dbReference type="PATRIC" id="fig|273123.14.peg.1427"/>
<dbReference type="UniPathway" id="UPA00344"/>
<dbReference type="Proteomes" id="UP000001011">
    <property type="component" value="Chromosome"/>
</dbReference>
<dbReference type="GO" id="GO:0061799">
    <property type="term" value="F:cyclic pyranopterin monophosphate synthase activity"/>
    <property type="evidence" value="ECO:0007669"/>
    <property type="project" value="UniProtKB-UniRule"/>
</dbReference>
<dbReference type="GO" id="GO:0006777">
    <property type="term" value="P:Mo-molybdopterin cofactor biosynthetic process"/>
    <property type="evidence" value="ECO:0007669"/>
    <property type="project" value="UniProtKB-UniRule"/>
</dbReference>
<dbReference type="CDD" id="cd01420">
    <property type="entry name" value="MoaC_PE"/>
    <property type="match status" value="1"/>
</dbReference>
<dbReference type="FunFam" id="3.30.70.640:FF:000001">
    <property type="entry name" value="Cyclic pyranopterin monophosphate synthase"/>
    <property type="match status" value="1"/>
</dbReference>
<dbReference type="Gene3D" id="3.30.70.640">
    <property type="entry name" value="Molybdopterin cofactor biosynthesis C (MoaC) domain"/>
    <property type="match status" value="1"/>
</dbReference>
<dbReference type="HAMAP" id="MF_01224_B">
    <property type="entry name" value="MoaC_B"/>
    <property type="match status" value="1"/>
</dbReference>
<dbReference type="InterPro" id="IPR023045">
    <property type="entry name" value="MoaC"/>
</dbReference>
<dbReference type="InterPro" id="IPR047594">
    <property type="entry name" value="MoaC_bact/euk"/>
</dbReference>
<dbReference type="InterPro" id="IPR036522">
    <property type="entry name" value="MoaC_sf"/>
</dbReference>
<dbReference type="InterPro" id="IPR050105">
    <property type="entry name" value="MoCo_biosynth_MoaA/MoaC"/>
</dbReference>
<dbReference type="InterPro" id="IPR002820">
    <property type="entry name" value="Mopterin_CF_biosynth-C_dom"/>
</dbReference>
<dbReference type="NCBIfam" id="TIGR00581">
    <property type="entry name" value="moaC"/>
    <property type="match status" value="1"/>
</dbReference>
<dbReference type="NCBIfam" id="NF006870">
    <property type="entry name" value="PRK09364.1"/>
    <property type="match status" value="1"/>
</dbReference>
<dbReference type="PANTHER" id="PTHR22960">
    <property type="entry name" value="MOLYBDOPTERIN COFACTOR SYNTHESIS PROTEIN A"/>
    <property type="match status" value="1"/>
</dbReference>
<dbReference type="Pfam" id="PF01967">
    <property type="entry name" value="MoaC"/>
    <property type="match status" value="1"/>
</dbReference>
<dbReference type="SUPFAM" id="SSF55040">
    <property type="entry name" value="Molybdenum cofactor biosynthesis protein C, MoaC"/>
    <property type="match status" value="1"/>
</dbReference>
<evidence type="ECO:0000255" key="1">
    <source>
        <dbReference type="HAMAP-Rule" id="MF_01224"/>
    </source>
</evidence>
<proteinExistence type="inferred from homology"/>
<sequence length="159" mass="17211">MTQLTHINTAGEAHMVDVSAKNETVREARAEAFVDMQAATLAMIIDGSHHKGDVFATARIAGIQAAKKTWELIPLCHPLLLTKVEVKLEAQPEHNRVRIETCCRLTGKTGVEMEALTAASVAALTIYDMCKAVQKDMVIGPVRLLTKSGGKSGDFKVDI</sequence>
<keyword id="KW-0456">Lyase</keyword>
<keyword id="KW-0501">Molybdenum cofactor biosynthesis</keyword>
<feature type="chain" id="PRO_1000054168" description="Cyclic pyranopterin monophosphate synthase">
    <location>
        <begin position="1"/>
        <end position="159"/>
    </location>
</feature>
<feature type="active site" evidence="1">
    <location>
        <position position="128"/>
    </location>
</feature>
<feature type="binding site" evidence="1">
    <location>
        <begin position="75"/>
        <end position="77"/>
    </location>
    <ligand>
        <name>substrate</name>
    </ligand>
</feature>
<feature type="binding site" evidence="1">
    <location>
        <begin position="113"/>
        <end position="114"/>
    </location>
    <ligand>
        <name>substrate</name>
    </ligand>
</feature>
<comment type="function">
    <text evidence="1">Catalyzes the conversion of (8S)-3',8-cyclo-7,8-dihydroguanosine 5'-triphosphate to cyclic pyranopterin monophosphate (cPMP).</text>
</comment>
<comment type="catalytic activity">
    <reaction evidence="1">
        <text>(8S)-3',8-cyclo-7,8-dihydroguanosine 5'-triphosphate = cyclic pyranopterin phosphate + diphosphate</text>
        <dbReference type="Rhea" id="RHEA:49580"/>
        <dbReference type="ChEBI" id="CHEBI:33019"/>
        <dbReference type="ChEBI" id="CHEBI:59648"/>
        <dbReference type="ChEBI" id="CHEBI:131766"/>
        <dbReference type="EC" id="4.6.1.17"/>
    </reaction>
</comment>
<comment type="pathway">
    <text evidence="1">Cofactor biosynthesis; molybdopterin biosynthesis.</text>
</comment>
<comment type="subunit">
    <text evidence="1">Homohexamer; trimer of dimers.</text>
</comment>
<comment type="similarity">
    <text evidence="1">Belongs to the MoaC family.</text>
</comment>
<name>MOAC_YERPS</name>
<organism>
    <name type="scientific">Yersinia pseudotuberculosis serotype I (strain IP32953)</name>
    <dbReference type="NCBI Taxonomy" id="273123"/>
    <lineage>
        <taxon>Bacteria</taxon>
        <taxon>Pseudomonadati</taxon>
        <taxon>Pseudomonadota</taxon>
        <taxon>Gammaproteobacteria</taxon>
        <taxon>Enterobacterales</taxon>
        <taxon>Yersiniaceae</taxon>
        <taxon>Yersinia</taxon>
    </lineage>
</organism>
<gene>
    <name evidence="1" type="primary">moaC</name>
    <name type="ordered locus">YPTB1191</name>
</gene>
<protein>
    <recommendedName>
        <fullName evidence="1">Cyclic pyranopterin monophosphate synthase</fullName>
        <ecNumber evidence="1">4.6.1.17</ecNumber>
    </recommendedName>
    <alternativeName>
        <fullName evidence="1">Molybdenum cofactor biosynthesis protein C</fullName>
    </alternativeName>
</protein>
<reference key="1">
    <citation type="journal article" date="2004" name="Proc. Natl. Acad. Sci. U.S.A.">
        <title>Insights into the evolution of Yersinia pestis through whole-genome comparison with Yersinia pseudotuberculosis.</title>
        <authorList>
            <person name="Chain P.S.G."/>
            <person name="Carniel E."/>
            <person name="Larimer F.W."/>
            <person name="Lamerdin J."/>
            <person name="Stoutland P.O."/>
            <person name="Regala W.M."/>
            <person name="Georgescu A.M."/>
            <person name="Vergez L.M."/>
            <person name="Land M.L."/>
            <person name="Motin V.L."/>
            <person name="Brubaker R.R."/>
            <person name="Fowler J."/>
            <person name="Hinnebusch J."/>
            <person name="Marceau M."/>
            <person name="Medigue C."/>
            <person name="Simonet M."/>
            <person name="Chenal-Francisque V."/>
            <person name="Souza B."/>
            <person name="Dacheux D."/>
            <person name="Elliott J.M."/>
            <person name="Derbise A."/>
            <person name="Hauser L.J."/>
            <person name="Garcia E."/>
        </authorList>
    </citation>
    <scope>NUCLEOTIDE SEQUENCE [LARGE SCALE GENOMIC DNA]</scope>
    <source>
        <strain>IP32953</strain>
    </source>
</reference>